<evidence type="ECO:0000250" key="1">
    <source>
        <dbReference type="UniProtKB" id="P33201"/>
    </source>
</evidence>
<evidence type="ECO:0000250" key="2">
    <source>
        <dbReference type="UniProtKB" id="Q9UKD2"/>
    </source>
</evidence>
<evidence type="ECO:0000256" key="3">
    <source>
        <dbReference type="SAM" id="MobiDB-lite"/>
    </source>
</evidence>
<evidence type="ECO:0000305" key="4"/>
<evidence type="ECO:0007744" key="5">
    <source>
    </source>
</evidence>
<comment type="function">
    <text evidence="1">Component of the ribosome assembly machinery. Nuclear paralog of the ribosomal protein P0, it binds pre-60S subunits at an early stage of assembly in the nucleolus, and is replaced by P0 in cytoplasmic pre-60S subunits and mature 80S ribosomes.</text>
</comment>
<comment type="subunit">
    <text evidence="2">Associates with the pre-60S ribosomal particle. Interacts with MINAS-60 (product of an alternative open reading frame of RBM10).</text>
</comment>
<comment type="subcellular location">
    <subcellularLocation>
        <location evidence="1">Nucleus</location>
        <location evidence="1">Nucleolus</location>
    </subcellularLocation>
    <subcellularLocation>
        <location evidence="1">Cytoplasm</location>
    </subcellularLocation>
    <text evidence="1">Shuttles between the nucleus and the cytoplasm.</text>
</comment>
<comment type="similarity">
    <text evidence="4">Belongs to the universal ribosomal protein uL10 family.</text>
</comment>
<name>MRT4_MOUSE</name>
<organism>
    <name type="scientific">Mus musculus</name>
    <name type="common">Mouse</name>
    <dbReference type="NCBI Taxonomy" id="10090"/>
    <lineage>
        <taxon>Eukaryota</taxon>
        <taxon>Metazoa</taxon>
        <taxon>Chordata</taxon>
        <taxon>Craniata</taxon>
        <taxon>Vertebrata</taxon>
        <taxon>Euteleostomi</taxon>
        <taxon>Mammalia</taxon>
        <taxon>Eutheria</taxon>
        <taxon>Euarchontoglires</taxon>
        <taxon>Glires</taxon>
        <taxon>Rodentia</taxon>
        <taxon>Myomorpha</taxon>
        <taxon>Muroidea</taxon>
        <taxon>Muridae</taxon>
        <taxon>Murinae</taxon>
        <taxon>Mus</taxon>
        <taxon>Mus</taxon>
    </lineage>
</organism>
<dbReference type="EMBL" id="AK011387">
    <property type="protein sequence ID" value="BAB27585.1"/>
    <property type="molecule type" value="mRNA"/>
</dbReference>
<dbReference type="EMBL" id="BC005734">
    <property type="protein sequence ID" value="AAH05734.1"/>
    <property type="molecule type" value="mRNA"/>
</dbReference>
<dbReference type="CCDS" id="CCDS71505.1"/>
<dbReference type="RefSeq" id="NP_001277739.1">
    <property type="nucleotide sequence ID" value="NM_001290810.1"/>
</dbReference>
<dbReference type="RefSeq" id="NP_076025.1">
    <property type="nucleotide sequence ID" value="NM_023536.3"/>
</dbReference>
<dbReference type="SMR" id="Q9D0I8"/>
<dbReference type="BioGRID" id="213745">
    <property type="interactions" value="29"/>
</dbReference>
<dbReference type="CORUM" id="Q9D0I8"/>
<dbReference type="FunCoup" id="Q9D0I8">
    <property type="interactions" value="2428"/>
</dbReference>
<dbReference type="IntAct" id="Q9D0I8">
    <property type="interactions" value="1"/>
</dbReference>
<dbReference type="STRING" id="10090.ENSMUSP00000099561"/>
<dbReference type="iPTMnet" id="Q9D0I8"/>
<dbReference type="PhosphoSitePlus" id="Q9D0I8"/>
<dbReference type="PaxDb" id="10090-ENSMUSP00000099561"/>
<dbReference type="ProteomicsDB" id="290060"/>
<dbReference type="Pumba" id="Q9D0I8"/>
<dbReference type="Antibodypedia" id="29590">
    <property type="antibodies" value="208 antibodies from 25 providers"/>
</dbReference>
<dbReference type="DNASU" id="69902"/>
<dbReference type="Ensembl" id="ENSMUST00000102503.10">
    <property type="protein sequence ID" value="ENSMUSP00000099561.4"/>
    <property type="gene ID" value="ENSMUSG00000028741.14"/>
</dbReference>
<dbReference type="GeneID" id="69902"/>
<dbReference type="KEGG" id="mmu:69902"/>
<dbReference type="UCSC" id="uc008vme.2">
    <property type="organism name" value="mouse"/>
</dbReference>
<dbReference type="AGR" id="MGI:1917152"/>
<dbReference type="CTD" id="51154"/>
<dbReference type="MGI" id="MGI:1917152">
    <property type="gene designation" value="Mrto4"/>
</dbReference>
<dbReference type="VEuPathDB" id="HostDB:ENSMUSG00000028741"/>
<dbReference type="eggNOG" id="KOG0816">
    <property type="taxonomic scope" value="Eukaryota"/>
</dbReference>
<dbReference type="GeneTree" id="ENSGT00390000006238"/>
<dbReference type="HOGENOM" id="CLU_071690_3_0_1"/>
<dbReference type="InParanoid" id="Q9D0I8"/>
<dbReference type="OMA" id="LEWAENY"/>
<dbReference type="OrthoDB" id="10262308at2759"/>
<dbReference type="PhylomeDB" id="Q9D0I8"/>
<dbReference type="TreeFam" id="TF300111"/>
<dbReference type="BioGRID-ORCS" id="69902">
    <property type="hits" value="23 hits in 78 CRISPR screens"/>
</dbReference>
<dbReference type="ChiTaRS" id="Mrto4">
    <property type="organism name" value="mouse"/>
</dbReference>
<dbReference type="PRO" id="PR:Q9D0I8"/>
<dbReference type="Proteomes" id="UP000000589">
    <property type="component" value="Chromosome 4"/>
</dbReference>
<dbReference type="RNAct" id="Q9D0I8">
    <property type="molecule type" value="protein"/>
</dbReference>
<dbReference type="Bgee" id="ENSMUSG00000028741">
    <property type="expression patterns" value="Expressed in epiblast (generic) and 70 other cell types or tissues"/>
</dbReference>
<dbReference type="ExpressionAtlas" id="Q9D0I8">
    <property type="expression patterns" value="baseline and differential"/>
</dbReference>
<dbReference type="GO" id="GO:0005737">
    <property type="term" value="C:cytoplasm"/>
    <property type="evidence" value="ECO:0007669"/>
    <property type="project" value="UniProtKB-SubCell"/>
</dbReference>
<dbReference type="GO" id="GO:0005730">
    <property type="term" value="C:nucleolus"/>
    <property type="evidence" value="ECO:0007669"/>
    <property type="project" value="UniProtKB-SubCell"/>
</dbReference>
<dbReference type="GO" id="GO:0000027">
    <property type="term" value="P:ribosomal large subunit assembly"/>
    <property type="evidence" value="ECO:0007669"/>
    <property type="project" value="InterPro"/>
</dbReference>
<dbReference type="CDD" id="cd05796">
    <property type="entry name" value="Ribosomal_P0_like"/>
    <property type="match status" value="1"/>
</dbReference>
<dbReference type="FunFam" id="3.30.70.1730:FF:000004">
    <property type="entry name" value="Ribosome assembly factor mrt4"/>
    <property type="match status" value="1"/>
</dbReference>
<dbReference type="FunFam" id="3.90.105.20:FF:000002">
    <property type="entry name" value="Ribosome assembly factor mrt4"/>
    <property type="match status" value="1"/>
</dbReference>
<dbReference type="Gene3D" id="3.30.70.1730">
    <property type="match status" value="1"/>
</dbReference>
<dbReference type="Gene3D" id="3.90.105.20">
    <property type="match status" value="1"/>
</dbReference>
<dbReference type="InterPro" id="IPR033867">
    <property type="entry name" value="Mrt4"/>
</dbReference>
<dbReference type="InterPro" id="IPR001790">
    <property type="entry name" value="Ribosomal_uL10"/>
</dbReference>
<dbReference type="InterPro" id="IPR040637">
    <property type="entry name" value="Ribosomal_uL10-like_insert"/>
</dbReference>
<dbReference type="InterPro" id="IPR043164">
    <property type="entry name" value="Ribosomal_uL10-like_insert_sf"/>
</dbReference>
<dbReference type="InterPro" id="IPR043141">
    <property type="entry name" value="Ribosomal_uL10-like_sf"/>
</dbReference>
<dbReference type="InterPro" id="IPR051742">
    <property type="entry name" value="Ribosome_Assembly_uL10"/>
</dbReference>
<dbReference type="PANTHER" id="PTHR45841:SF1">
    <property type="entry name" value="MRNA TURNOVER PROTEIN 4 HOMOLOG"/>
    <property type="match status" value="1"/>
</dbReference>
<dbReference type="PANTHER" id="PTHR45841">
    <property type="entry name" value="MRNA TURNOVER PROTEIN 4 MRTO4"/>
    <property type="match status" value="1"/>
</dbReference>
<dbReference type="Pfam" id="PF00466">
    <property type="entry name" value="Ribosomal_L10"/>
    <property type="match status" value="1"/>
</dbReference>
<dbReference type="Pfam" id="PF17777">
    <property type="entry name" value="RL10P_insert"/>
    <property type="match status" value="1"/>
</dbReference>
<dbReference type="SUPFAM" id="SSF160369">
    <property type="entry name" value="Ribosomal protein L10-like"/>
    <property type="match status" value="1"/>
</dbReference>
<proteinExistence type="evidence at protein level"/>
<sequence>MPKSKRDKKVSLTKTAKKGLELKQNLIEELRKCVDTYKYLFIFSVANMRNSKLKDIRNAWKHSRMFFGKNKVMMVALGRSPSDEYKDNLHQVSKKLRGEVGLLFTNRTKEEVNEWFTKYTEMDFARAGNKATLTVSLDPGPLKQFPHSMEPQLRQLGLPTALKKGVVTLLSDYEVCKEGDVLTPEQARILKLFGYEMAEFKVIIKYMWDAQSGRFQQMDDDLPESAPESEGESEEEDDS</sequence>
<gene>
    <name type="primary">Mrto4</name>
    <name type="synonym">Mrt4</name>
</gene>
<accession>Q9D0I8</accession>
<accession>Q99JR7</accession>
<protein>
    <recommendedName>
        <fullName evidence="1">mRNA turnover protein 4 homolog</fullName>
    </recommendedName>
    <alternativeName>
        <fullName evidence="1 4">Ribosome assembly factor Mrto4</fullName>
    </alternativeName>
</protein>
<feature type="chain" id="PRO_0000154817" description="mRNA turnover protein 4 homolog">
    <location>
        <begin position="1"/>
        <end position="239"/>
    </location>
</feature>
<feature type="region of interest" description="Disordered" evidence="3">
    <location>
        <begin position="216"/>
        <end position="239"/>
    </location>
</feature>
<feature type="compositionally biased region" description="Acidic residues" evidence="3">
    <location>
        <begin position="218"/>
        <end position="239"/>
    </location>
</feature>
<feature type="modified residue" description="Phosphoserine" evidence="5">
    <location>
        <position position="225"/>
    </location>
</feature>
<feature type="modified residue" description="Phosphoserine" evidence="5">
    <location>
        <position position="229"/>
    </location>
</feature>
<feature type="modified residue" description="Phosphoserine" evidence="5">
    <location>
        <position position="233"/>
    </location>
</feature>
<feature type="sequence conflict" description="In Ref. 2; AAH05734." evidence="4" ref="2">
    <location>
        <position position="191"/>
    </location>
</feature>
<keyword id="KW-0963">Cytoplasm</keyword>
<keyword id="KW-0539">Nucleus</keyword>
<keyword id="KW-0597">Phosphoprotein</keyword>
<keyword id="KW-1185">Reference proteome</keyword>
<keyword id="KW-0690">Ribosome biogenesis</keyword>
<reference key="1">
    <citation type="journal article" date="2005" name="Science">
        <title>The transcriptional landscape of the mammalian genome.</title>
        <authorList>
            <person name="Carninci P."/>
            <person name="Kasukawa T."/>
            <person name="Katayama S."/>
            <person name="Gough J."/>
            <person name="Frith M.C."/>
            <person name="Maeda N."/>
            <person name="Oyama R."/>
            <person name="Ravasi T."/>
            <person name="Lenhard B."/>
            <person name="Wells C."/>
            <person name="Kodzius R."/>
            <person name="Shimokawa K."/>
            <person name="Bajic V.B."/>
            <person name="Brenner S.E."/>
            <person name="Batalov S."/>
            <person name="Forrest A.R."/>
            <person name="Zavolan M."/>
            <person name="Davis M.J."/>
            <person name="Wilming L.G."/>
            <person name="Aidinis V."/>
            <person name="Allen J.E."/>
            <person name="Ambesi-Impiombato A."/>
            <person name="Apweiler R."/>
            <person name="Aturaliya R.N."/>
            <person name="Bailey T.L."/>
            <person name="Bansal M."/>
            <person name="Baxter L."/>
            <person name="Beisel K.W."/>
            <person name="Bersano T."/>
            <person name="Bono H."/>
            <person name="Chalk A.M."/>
            <person name="Chiu K.P."/>
            <person name="Choudhary V."/>
            <person name="Christoffels A."/>
            <person name="Clutterbuck D.R."/>
            <person name="Crowe M.L."/>
            <person name="Dalla E."/>
            <person name="Dalrymple B.P."/>
            <person name="de Bono B."/>
            <person name="Della Gatta G."/>
            <person name="di Bernardo D."/>
            <person name="Down T."/>
            <person name="Engstrom P."/>
            <person name="Fagiolini M."/>
            <person name="Faulkner G."/>
            <person name="Fletcher C.F."/>
            <person name="Fukushima T."/>
            <person name="Furuno M."/>
            <person name="Futaki S."/>
            <person name="Gariboldi M."/>
            <person name="Georgii-Hemming P."/>
            <person name="Gingeras T.R."/>
            <person name="Gojobori T."/>
            <person name="Green R.E."/>
            <person name="Gustincich S."/>
            <person name="Harbers M."/>
            <person name="Hayashi Y."/>
            <person name="Hensch T.K."/>
            <person name="Hirokawa N."/>
            <person name="Hill D."/>
            <person name="Huminiecki L."/>
            <person name="Iacono M."/>
            <person name="Ikeo K."/>
            <person name="Iwama A."/>
            <person name="Ishikawa T."/>
            <person name="Jakt M."/>
            <person name="Kanapin A."/>
            <person name="Katoh M."/>
            <person name="Kawasawa Y."/>
            <person name="Kelso J."/>
            <person name="Kitamura H."/>
            <person name="Kitano H."/>
            <person name="Kollias G."/>
            <person name="Krishnan S.P."/>
            <person name="Kruger A."/>
            <person name="Kummerfeld S.K."/>
            <person name="Kurochkin I.V."/>
            <person name="Lareau L.F."/>
            <person name="Lazarevic D."/>
            <person name="Lipovich L."/>
            <person name="Liu J."/>
            <person name="Liuni S."/>
            <person name="McWilliam S."/>
            <person name="Madan Babu M."/>
            <person name="Madera M."/>
            <person name="Marchionni L."/>
            <person name="Matsuda H."/>
            <person name="Matsuzawa S."/>
            <person name="Miki H."/>
            <person name="Mignone F."/>
            <person name="Miyake S."/>
            <person name="Morris K."/>
            <person name="Mottagui-Tabar S."/>
            <person name="Mulder N."/>
            <person name="Nakano N."/>
            <person name="Nakauchi H."/>
            <person name="Ng P."/>
            <person name="Nilsson R."/>
            <person name="Nishiguchi S."/>
            <person name="Nishikawa S."/>
            <person name="Nori F."/>
            <person name="Ohara O."/>
            <person name="Okazaki Y."/>
            <person name="Orlando V."/>
            <person name="Pang K.C."/>
            <person name="Pavan W.J."/>
            <person name="Pavesi G."/>
            <person name="Pesole G."/>
            <person name="Petrovsky N."/>
            <person name="Piazza S."/>
            <person name="Reed J."/>
            <person name="Reid J.F."/>
            <person name="Ring B.Z."/>
            <person name="Ringwald M."/>
            <person name="Rost B."/>
            <person name="Ruan Y."/>
            <person name="Salzberg S.L."/>
            <person name="Sandelin A."/>
            <person name="Schneider C."/>
            <person name="Schoenbach C."/>
            <person name="Sekiguchi K."/>
            <person name="Semple C.A."/>
            <person name="Seno S."/>
            <person name="Sessa L."/>
            <person name="Sheng Y."/>
            <person name="Shibata Y."/>
            <person name="Shimada H."/>
            <person name="Shimada K."/>
            <person name="Silva D."/>
            <person name="Sinclair B."/>
            <person name="Sperling S."/>
            <person name="Stupka E."/>
            <person name="Sugiura K."/>
            <person name="Sultana R."/>
            <person name="Takenaka Y."/>
            <person name="Taki K."/>
            <person name="Tammoja K."/>
            <person name="Tan S.L."/>
            <person name="Tang S."/>
            <person name="Taylor M.S."/>
            <person name="Tegner J."/>
            <person name="Teichmann S.A."/>
            <person name="Ueda H.R."/>
            <person name="van Nimwegen E."/>
            <person name="Verardo R."/>
            <person name="Wei C.L."/>
            <person name="Yagi K."/>
            <person name="Yamanishi H."/>
            <person name="Zabarovsky E."/>
            <person name="Zhu S."/>
            <person name="Zimmer A."/>
            <person name="Hide W."/>
            <person name="Bult C."/>
            <person name="Grimmond S.M."/>
            <person name="Teasdale R.D."/>
            <person name="Liu E.T."/>
            <person name="Brusic V."/>
            <person name="Quackenbush J."/>
            <person name="Wahlestedt C."/>
            <person name="Mattick J.S."/>
            <person name="Hume D.A."/>
            <person name="Kai C."/>
            <person name="Sasaki D."/>
            <person name="Tomaru Y."/>
            <person name="Fukuda S."/>
            <person name="Kanamori-Katayama M."/>
            <person name="Suzuki M."/>
            <person name="Aoki J."/>
            <person name="Arakawa T."/>
            <person name="Iida J."/>
            <person name="Imamura K."/>
            <person name="Itoh M."/>
            <person name="Kato T."/>
            <person name="Kawaji H."/>
            <person name="Kawagashira N."/>
            <person name="Kawashima T."/>
            <person name="Kojima M."/>
            <person name="Kondo S."/>
            <person name="Konno H."/>
            <person name="Nakano K."/>
            <person name="Ninomiya N."/>
            <person name="Nishio T."/>
            <person name="Okada M."/>
            <person name="Plessy C."/>
            <person name="Shibata K."/>
            <person name="Shiraki T."/>
            <person name="Suzuki S."/>
            <person name="Tagami M."/>
            <person name="Waki K."/>
            <person name="Watahiki A."/>
            <person name="Okamura-Oho Y."/>
            <person name="Suzuki H."/>
            <person name="Kawai J."/>
            <person name="Hayashizaki Y."/>
        </authorList>
    </citation>
    <scope>NUCLEOTIDE SEQUENCE [LARGE SCALE MRNA]</scope>
    <source>
        <strain>C57BL/6J</strain>
    </source>
</reference>
<reference key="2">
    <citation type="journal article" date="2004" name="Genome Res.">
        <title>The status, quality, and expansion of the NIH full-length cDNA project: the Mammalian Gene Collection (MGC).</title>
        <authorList>
            <consortium name="The MGC Project Team"/>
        </authorList>
    </citation>
    <scope>NUCLEOTIDE SEQUENCE [LARGE SCALE MRNA]</scope>
    <source>
        <strain>FVB/N</strain>
        <tissue>Mammary tumor</tissue>
    </source>
</reference>
<reference key="3">
    <citation type="journal article" date="2010" name="Cell">
        <title>A tissue-specific atlas of mouse protein phosphorylation and expression.</title>
        <authorList>
            <person name="Huttlin E.L."/>
            <person name="Jedrychowski M.P."/>
            <person name="Elias J.E."/>
            <person name="Goswami T."/>
            <person name="Rad R."/>
            <person name="Beausoleil S.A."/>
            <person name="Villen J."/>
            <person name="Haas W."/>
            <person name="Sowa M.E."/>
            <person name="Gygi S.P."/>
        </authorList>
    </citation>
    <scope>PHOSPHORYLATION [LARGE SCALE ANALYSIS] AT SER-225; SER-229 AND SER-233</scope>
    <scope>IDENTIFICATION BY MASS SPECTROMETRY [LARGE SCALE ANALYSIS]</scope>
    <source>
        <tissue>Liver</tissue>
        <tissue>Pancreas</tissue>
        <tissue>Spleen</tissue>
        <tissue>Testis</tissue>
    </source>
</reference>